<reference key="1">
    <citation type="journal article" date="1999" name="Genomics">
        <title>Molecular cloning and characterization of the human CLOCK gene: expression in the suprachiasmatic nuclei.</title>
        <authorList>
            <person name="Steeves T.D.L."/>
            <person name="King D.P."/>
            <person name="Zhao Y."/>
            <person name="Sangoram A.M."/>
            <person name="Du F."/>
            <person name="Bowcock A.M."/>
            <person name="Moore R.Y."/>
            <person name="Takahashi J.S."/>
        </authorList>
    </citation>
    <scope>NUCLEOTIDE SEQUENCE [GENOMIC DNA / MRNA]</scope>
    <scope>TISSUE SPECIFICITY</scope>
</reference>
<reference key="2">
    <citation type="submission" date="2006-09" db="EMBL/GenBank/DDBJ databases">
        <authorList>
            <consortium name="NHLBI resequencing and genotyping service (RS&amp;G)"/>
        </authorList>
    </citation>
    <scope>NUCLEOTIDE SEQUENCE [GENOMIC DNA]</scope>
</reference>
<reference key="3">
    <citation type="journal article" date="1997" name="DNA Res.">
        <title>Prediction of the coding sequences of unidentified human genes. VII. The complete sequences of 100 new cDNA clones from brain which can code for large proteins in vitro.</title>
        <authorList>
            <person name="Nagase T."/>
            <person name="Ishikawa K."/>
            <person name="Nakajima D."/>
            <person name="Ohira M."/>
            <person name="Seki N."/>
            <person name="Miyajima N."/>
            <person name="Tanaka A."/>
            <person name="Kotani H."/>
            <person name="Nomura N."/>
            <person name="Ohara O."/>
        </authorList>
    </citation>
    <scope>NUCLEOTIDE SEQUENCE [LARGE SCALE MRNA]</scope>
    <source>
        <tissue>Brain</tissue>
    </source>
</reference>
<reference key="4">
    <citation type="journal article" date="2004" name="Nat. Genet.">
        <title>Complete sequencing and characterization of 21,243 full-length human cDNAs.</title>
        <authorList>
            <person name="Ota T."/>
            <person name="Suzuki Y."/>
            <person name="Nishikawa T."/>
            <person name="Otsuki T."/>
            <person name="Sugiyama T."/>
            <person name="Irie R."/>
            <person name="Wakamatsu A."/>
            <person name="Hayashi K."/>
            <person name="Sato H."/>
            <person name="Nagai K."/>
            <person name="Kimura K."/>
            <person name="Makita H."/>
            <person name="Sekine M."/>
            <person name="Obayashi M."/>
            <person name="Nishi T."/>
            <person name="Shibahara T."/>
            <person name="Tanaka T."/>
            <person name="Ishii S."/>
            <person name="Yamamoto J."/>
            <person name="Saito K."/>
            <person name="Kawai Y."/>
            <person name="Isono Y."/>
            <person name="Nakamura Y."/>
            <person name="Nagahari K."/>
            <person name="Murakami K."/>
            <person name="Yasuda T."/>
            <person name="Iwayanagi T."/>
            <person name="Wagatsuma M."/>
            <person name="Shiratori A."/>
            <person name="Sudo H."/>
            <person name="Hosoiri T."/>
            <person name="Kaku Y."/>
            <person name="Kodaira H."/>
            <person name="Kondo H."/>
            <person name="Sugawara M."/>
            <person name="Takahashi M."/>
            <person name="Kanda K."/>
            <person name="Yokoi T."/>
            <person name="Furuya T."/>
            <person name="Kikkawa E."/>
            <person name="Omura Y."/>
            <person name="Abe K."/>
            <person name="Kamihara K."/>
            <person name="Katsuta N."/>
            <person name="Sato K."/>
            <person name="Tanikawa M."/>
            <person name="Yamazaki M."/>
            <person name="Ninomiya K."/>
            <person name="Ishibashi T."/>
            <person name="Yamashita H."/>
            <person name="Murakawa K."/>
            <person name="Fujimori K."/>
            <person name="Tanai H."/>
            <person name="Kimata M."/>
            <person name="Watanabe M."/>
            <person name="Hiraoka S."/>
            <person name="Chiba Y."/>
            <person name="Ishida S."/>
            <person name="Ono Y."/>
            <person name="Takiguchi S."/>
            <person name="Watanabe S."/>
            <person name="Yosida M."/>
            <person name="Hotuta T."/>
            <person name="Kusano J."/>
            <person name="Kanehori K."/>
            <person name="Takahashi-Fujii A."/>
            <person name="Hara H."/>
            <person name="Tanase T.-O."/>
            <person name="Nomura Y."/>
            <person name="Togiya S."/>
            <person name="Komai F."/>
            <person name="Hara R."/>
            <person name="Takeuchi K."/>
            <person name="Arita M."/>
            <person name="Imose N."/>
            <person name="Musashino K."/>
            <person name="Yuuki H."/>
            <person name="Oshima A."/>
            <person name="Sasaki N."/>
            <person name="Aotsuka S."/>
            <person name="Yoshikawa Y."/>
            <person name="Matsunawa H."/>
            <person name="Ichihara T."/>
            <person name="Shiohata N."/>
            <person name="Sano S."/>
            <person name="Moriya S."/>
            <person name="Momiyama H."/>
            <person name="Satoh N."/>
            <person name="Takami S."/>
            <person name="Terashima Y."/>
            <person name="Suzuki O."/>
            <person name="Nakagawa S."/>
            <person name="Senoh A."/>
            <person name="Mizoguchi H."/>
            <person name="Goto Y."/>
            <person name="Shimizu F."/>
            <person name="Wakebe H."/>
            <person name="Hishigaki H."/>
            <person name="Watanabe T."/>
            <person name="Sugiyama A."/>
            <person name="Takemoto M."/>
            <person name="Kawakami B."/>
            <person name="Yamazaki M."/>
            <person name="Watanabe K."/>
            <person name="Kumagai A."/>
            <person name="Itakura S."/>
            <person name="Fukuzumi Y."/>
            <person name="Fujimori Y."/>
            <person name="Komiyama M."/>
            <person name="Tashiro H."/>
            <person name="Tanigami A."/>
            <person name="Fujiwara T."/>
            <person name="Ono T."/>
            <person name="Yamada K."/>
            <person name="Fujii Y."/>
            <person name="Ozaki K."/>
            <person name="Hirao M."/>
            <person name="Ohmori Y."/>
            <person name="Kawabata A."/>
            <person name="Hikiji T."/>
            <person name="Kobatake N."/>
            <person name="Inagaki H."/>
            <person name="Ikema Y."/>
            <person name="Okamoto S."/>
            <person name="Okitani R."/>
            <person name="Kawakami T."/>
            <person name="Noguchi S."/>
            <person name="Itoh T."/>
            <person name="Shigeta K."/>
            <person name="Senba T."/>
            <person name="Matsumura K."/>
            <person name="Nakajima Y."/>
            <person name="Mizuno T."/>
            <person name="Morinaga M."/>
            <person name="Sasaki M."/>
            <person name="Togashi T."/>
            <person name="Oyama M."/>
            <person name="Hata H."/>
            <person name="Watanabe M."/>
            <person name="Komatsu T."/>
            <person name="Mizushima-Sugano J."/>
            <person name="Satoh T."/>
            <person name="Shirai Y."/>
            <person name="Takahashi Y."/>
            <person name="Nakagawa K."/>
            <person name="Okumura K."/>
            <person name="Nagase T."/>
            <person name="Nomura N."/>
            <person name="Kikuchi H."/>
            <person name="Masuho Y."/>
            <person name="Yamashita R."/>
            <person name="Nakai K."/>
            <person name="Yada T."/>
            <person name="Nakamura Y."/>
            <person name="Ohara O."/>
            <person name="Isogai T."/>
            <person name="Sugano S."/>
        </authorList>
    </citation>
    <scope>NUCLEOTIDE SEQUENCE [LARGE SCALE MRNA]</scope>
    <source>
        <tissue>Placenta</tissue>
    </source>
</reference>
<reference key="5">
    <citation type="journal article" date="2004" name="Genome Res.">
        <title>The status, quality, and expansion of the NIH full-length cDNA project: the Mammalian Gene Collection (MGC).</title>
        <authorList>
            <consortium name="The MGC Project Team"/>
        </authorList>
    </citation>
    <scope>NUCLEOTIDE SEQUENCE [LARGE SCALE MRNA]</scope>
    <source>
        <tissue>Lung</tissue>
    </source>
</reference>
<reference key="6">
    <citation type="submission" date="1997-08" db="EMBL/GenBank/DDBJ databases">
        <title>Molecular cloning of human Clock cDNA 5'-end.</title>
        <authorList>
            <person name="Ikeda M."/>
            <person name="Takehara N."/>
            <person name="Ebisawa T."/>
            <person name="Yamauchi T."/>
            <person name="Nomura M."/>
        </authorList>
    </citation>
    <scope>NUCLEOTIDE SEQUENCE [MRNA] OF 1-349</scope>
    <source>
        <tissue>Brain</tissue>
    </source>
</reference>
<reference key="7">
    <citation type="journal article" date="2001" name="Science">
        <title>Regulation of clock and NPAS2 DNA binding by the redox state of NAD cofactors.</title>
        <authorList>
            <person name="Rutter J."/>
            <person name="Reick M."/>
            <person name="Wu L.C."/>
            <person name="McKnight S.L."/>
        </authorList>
    </citation>
    <scope>DNA-BINDING</scope>
    <scope>ACTIVITY REGULATION</scope>
</reference>
<reference key="8">
    <citation type="journal article" date="2004" name="J. Biol. Chem.">
        <title>Histone acetyltransferase-dependent chromatin remodeling and the vascular clock.</title>
        <authorList>
            <person name="Curtis A.M."/>
            <person name="Seo S.B."/>
            <person name="Westgate E.J."/>
            <person name="Rudic R.D."/>
            <person name="Smyth E.M."/>
            <person name="Chakravarti D."/>
            <person name="FitzGerald G.A."/>
            <person name="McNamara P."/>
        </authorList>
    </citation>
    <scope>FUNCTION</scope>
    <scope>SUBCELLULAR LOCATION</scope>
    <scope>INTERACTION WITH KAT2B; CREBBP AND EP300</scope>
</reference>
<reference key="9">
    <citation type="journal article" date="2006" name="Nat. Genet.">
        <title>Feedback repression is required for mammalian circadian clock function.</title>
        <authorList>
            <person name="Sato T.K."/>
            <person name="Yamada R.G."/>
            <person name="Ukai H."/>
            <person name="Baggs J.E."/>
            <person name="Miraglia L.J."/>
            <person name="Kobayashi T.J."/>
            <person name="Welsh D.K."/>
            <person name="Kay S.A."/>
            <person name="Ueda H.R."/>
            <person name="Hogenesch J.B."/>
        </authorList>
    </citation>
    <scope>MUTAGENESIS OF GLU-116; GLY-332; HIS-360; GLU-367; VAL-601 AND PRO-840</scope>
</reference>
<reference key="10">
    <citation type="journal article" date="2008" name="Mol. Cell. Biochem.">
        <title>CLOCK/BMAL1 regulates human nocturnin transcription through binding to the E-box of nocturnin promoter.</title>
        <authorList>
            <person name="Li R."/>
            <person name="Yue J."/>
            <person name="Zhang Y."/>
            <person name="Zhou L."/>
            <person name="Hao W."/>
            <person name="Yuan J."/>
            <person name="Qiang B."/>
            <person name="Ding J.M."/>
            <person name="Peng X."/>
            <person name="Cao J.M."/>
        </authorList>
    </citation>
    <scope>FUNCTION</scope>
</reference>
<reference key="11">
    <citation type="journal article" date="2010" name="J. Biol. Chem.">
        <title>The transcriptional repressor ID2 can interact with the canonical clock components CLOCK and BMAL1 and mediate inhibitory effects on mPer1 expression.</title>
        <authorList>
            <person name="Ward S.M."/>
            <person name="Fernando S.J."/>
            <person name="Hou T.Y."/>
            <person name="Duffield G.E."/>
        </authorList>
    </citation>
    <scope>INTERACTION WITH ID2</scope>
</reference>
<reference key="12">
    <citation type="journal article" date="2011" name="J. Biol. Chem.">
        <title>Biochemical analysis of the canonical model for the mammalian circadian clock.</title>
        <authorList>
            <person name="Ye R."/>
            <person name="Selby C.P."/>
            <person name="Ozturk N."/>
            <person name="Annayev Y."/>
            <person name="Sancar A."/>
        </authorList>
    </citation>
    <scope>INTERACTION WITH BMAL1; CRY1 AND PER2</scope>
</reference>
<reference key="13">
    <citation type="journal article" date="2011" name="PLoS ONE">
        <title>Peripheral CLOCK regulates target-tissue glucocorticoid receptor transcriptional activity in a circadian fashion in man.</title>
        <authorList>
            <person name="Charmandari E."/>
            <person name="Chrousos G.P."/>
            <person name="Lambrou G.I."/>
            <person name="Pavlaki A."/>
            <person name="Koide H."/>
            <person name="Ng S.S."/>
            <person name="Kino T."/>
        </authorList>
    </citation>
    <scope>FUNCTION</scope>
    <scope>INTERACTION WITH NR3C1</scope>
</reference>
<reference key="14">
    <citation type="journal article" date="2011" name="Science">
        <title>A DNA damage response screen identifies RHINO, a 9-1-1 and TopBP1 interacting protein required for ATR signaling.</title>
        <authorList>
            <person name="Cotta-Ramusino C."/>
            <person name="McDonald E.R. III"/>
            <person name="Hurov K."/>
            <person name="Sowa M.E."/>
            <person name="Harper J.W."/>
            <person name="Elledge S.J."/>
        </authorList>
    </citation>
    <scope>FUNCTION</scope>
    <scope>SUBCELLULAR LOCATION</scope>
</reference>
<reference key="15">
    <citation type="journal article" date="2011" name="Science">
        <title>Histone lysine demethylase JARID1a activates CLOCK-BMAL1 and influences the circadian clock.</title>
        <authorList>
            <person name="DiTacchio L."/>
            <person name="Le H.D."/>
            <person name="Vollmers C."/>
            <person name="Hatori M."/>
            <person name="Witcher M."/>
            <person name="Secombe J."/>
            <person name="Panda S."/>
        </authorList>
    </citation>
    <scope>INTERACTION WITH KDM5A</scope>
</reference>
<reference key="16">
    <citation type="journal article" date="2012" name="J. Thromb. Haemost.">
        <title>Diurnal expression of the thrombopoietin gene is regulated by CLOCK.</title>
        <authorList>
            <person name="Tracey C.J."/>
            <person name="Pan X."/>
            <person name="Catterson J.H."/>
            <person name="Harmar A.J."/>
            <person name="Hussain M.M."/>
            <person name="Hartley P.S."/>
        </authorList>
    </citation>
    <scope>FUNCTION</scope>
</reference>
<reference key="17">
    <citation type="journal article" date="2013" name="Am. J. Physiol.">
        <title>Mechanism of the circadian clock in physiology.</title>
        <authorList>
            <person name="Richards J."/>
            <person name="Gumz M.L."/>
        </authorList>
    </citation>
    <scope>REVIEW</scope>
</reference>
<reference key="18">
    <citation type="journal article" date="2013" name="J. Biol. Chem.">
        <title>Cyclin-dependent kinase 5 (Cdk5) regulates the function of CLOCK protein by direct phosphorylation.</title>
        <authorList>
            <person name="Kwak Y."/>
            <person name="Jeong J."/>
            <person name="Lee S."/>
            <person name="Park Y.U."/>
            <person name="Lee S.A."/>
            <person name="Han D.H."/>
            <person name="Kim J.H."/>
            <person name="Ohshima T."/>
            <person name="Mikoshiba K."/>
            <person name="Suh Y.H."/>
            <person name="Cho S."/>
            <person name="Park S.K."/>
        </authorList>
    </citation>
    <scope>PHOSPHORYLATION AT THR-451 AND THR-461</scope>
    <scope>MUTAGENESIS OF THR-451 AND THR-461</scope>
    <scope>INTERACTION WITH THE COMPLEX P35/CDK5</scope>
</reference>
<reference key="19">
    <citation type="journal article" date="2013" name="J. Neurosci.">
        <title>p75 neurotrophin receptor is a clock gene that regulates oscillatory components of circadian and metabolic networks.</title>
        <authorList>
            <person name="Baeza-Raja B."/>
            <person name="Eckel-Mahan K."/>
            <person name="Zhang L."/>
            <person name="Vagena E."/>
            <person name="Tsigelny I.F."/>
            <person name="Sassone-Corsi P."/>
            <person name="Ptacek L.J."/>
            <person name="Akassoglou K."/>
        </authorList>
    </citation>
    <scope>FUNCTION</scope>
</reference>
<reference key="20">
    <citation type="journal article" date="2013" name="Oncogene">
        <title>CLOCK is a substrate of SUMO and sumoylation of CLOCK upregulates the transcriptional activity of estrogen receptor-alpha.</title>
        <authorList>
            <person name="Li S."/>
            <person name="Wang M."/>
            <person name="Ao X."/>
            <person name="Chang A.K."/>
            <person name="Yang C."/>
            <person name="Zhao F."/>
            <person name="Bi H."/>
            <person name="Liu Y."/>
            <person name="Xiao L."/>
            <person name="Wu H."/>
        </authorList>
    </citation>
    <scope>SUMOYLATION</scope>
    <scope>SUBCELLULAR LOCATION</scope>
    <scope>INTERACTION WITH ESR1</scope>
</reference>
<reference key="21">
    <citation type="journal article" date="2013" name="Physiol. Rev.">
        <title>Metabolism and the circadian clock converge.</title>
        <authorList>
            <person name="Eckel-Mahan K."/>
            <person name="Sassone-Corsi P."/>
        </authorList>
    </citation>
    <scope>REVIEW</scope>
</reference>
<reference key="22">
    <citation type="journal article" date="2014" name="J. Invest. Dermatol.">
        <title>A meeting of two chronobiological systems: circadian proteins Period1 and BMAL1 modulate the human hair cycle clock.</title>
        <authorList>
            <person name="Al-Nuaimi Y."/>
            <person name="Hardman J.A."/>
            <person name="Biro T."/>
            <person name="Haslam I.S."/>
            <person name="Philpott M.P."/>
            <person name="Toth B.I."/>
            <person name="Farjo N."/>
            <person name="Farjo B."/>
            <person name="Baier G."/>
            <person name="Watson R.E."/>
            <person name="Grimaldi B."/>
            <person name="Kloepper J.E."/>
            <person name="Paus R."/>
        </authorList>
    </citation>
    <scope>FUNCTION</scope>
    <scope>TISSUE SPECIFICITY</scope>
</reference>
<reference key="23">
    <citation type="journal article" date="2014" name="J. Proteomics">
        <title>An enzyme assisted RP-RPLC approach for in-depth analysis of human liver phosphoproteome.</title>
        <authorList>
            <person name="Bian Y."/>
            <person name="Song C."/>
            <person name="Cheng K."/>
            <person name="Dong M."/>
            <person name="Wang F."/>
            <person name="Huang J."/>
            <person name="Sun D."/>
            <person name="Wang L."/>
            <person name="Ye M."/>
            <person name="Zou H."/>
        </authorList>
    </citation>
    <scope>IDENTIFICATION BY MASS SPECTROMETRY [LARGE SCALE ANALYSIS]</scope>
    <source>
        <tissue>Liver</tissue>
    </source>
</reference>
<reference key="24">
    <citation type="journal article" date="2014" name="Trends Cell Biol.">
        <title>Molecular architecture of the mammalian circadian clock.</title>
        <authorList>
            <person name="Partch C.L."/>
            <person name="Green C.B."/>
            <person name="Takahashi J.S."/>
        </authorList>
    </citation>
    <scope>REVIEW</scope>
</reference>
<reference key="25">
    <citation type="journal article" date="2015" name="Mol. Cell">
        <title>Cancer/testis antigen PASD1 silences the circadian clock.</title>
        <authorList>
            <person name="Michael A.K."/>
            <person name="Harvey S.L."/>
            <person name="Sammons P.J."/>
            <person name="Anderson A.P."/>
            <person name="Kopalle H.M."/>
            <person name="Banham A.H."/>
            <person name="Partch C.L."/>
        </authorList>
    </citation>
    <scope>ASSOCIATION WITH PASD1</scope>
</reference>
<reference key="26">
    <citation type="journal article" date="2017" name="Mol. Cell">
        <title>CLOCK acetylates ASS1 to drive circadian rhythm of ureagenesis.</title>
        <authorList>
            <person name="Lin R."/>
            <person name="Mo Y."/>
            <person name="Zha H."/>
            <person name="Qu Z."/>
            <person name="Xie P."/>
            <person name="Zhu Z.J."/>
            <person name="Xu Y."/>
            <person name="Xiong Y."/>
            <person name="Guan K.L."/>
        </authorList>
    </citation>
    <scope>FUNCTION</scope>
    <scope>SUBCELLULAR LOCATION</scope>
    <scope>INTERACTION WITH BMAL1; ASS1; NDUFA9 AND IMPDH2</scope>
</reference>
<reference key="27">
    <citation type="journal article" date="2017" name="Oncotarget">
        <title>Cancer/testis antigen PIWIL2 suppresses circadian rhythms by regulating the stability and activity of BMAL1 and CLOCK.</title>
        <authorList>
            <person name="Lu Y."/>
            <person name="Zheng X."/>
            <person name="Hu W."/>
            <person name="Bian S."/>
            <person name="Zhang Z."/>
            <person name="Tao D."/>
            <person name="Liu Y."/>
            <person name="Ma Y."/>
        </authorList>
    </citation>
    <scope>INTERACTION WITH PIWIL2</scope>
</reference>
<reference key="28">
    <citation type="journal article" date="2018" name="Proc. Natl. Acad. Sci. U.S.A.">
        <title>Nuclear receptor HNF4A transrepresses CLOCK:BMAL1 and modulates tissue-specific circadian networks.</title>
        <authorList>
            <person name="Qu M."/>
            <person name="Duffy T."/>
            <person name="Hirota T."/>
            <person name="Kay S.A."/>
        </authorList>
    </citation>
    <scope>INTERACTION WITH HNF4A</scope>
</reference>
<reference key="29">
    <citation type="journal article" date="2013" name="Cell Res.">
        <title>Intermolecular recognition revealed by the complex structure of human CLOCK-BMAL1 basic helix-loop-helix domains with E-box DNA.</title>
        <authorList>
            <person name="Wang Z."/>
            <person name="Wu Y."/>
            <person name="Li L."/>
            <person name="Su X.D."/>
        </authorList>
    </citation>
    <scope>X-RAY CRYSTALLOGRAPHY (2.40 ANGSTROMS) OF 29-89 IN COMPLEX WITH BMAL1 AND DNA</scope>
    <scope>FUNCTION</scope>
    <scope>ACTIVITY REGULATION</scope>
    <scope>SUBUNIT</scope>
    <scope>MUTAGENESIS OF SER-38; SER-42; PHE-50 AND HIS-84</scope>
</reference>
<feature type="chain" id="PRO_0000127163" description="Circadian locomoter output cycles protein kaput">
    <location>
        <begin position="1"/>
        <end position="846"/>
    </location>
</feature>
<feature type="domain" description="bHLH" evidence="4">
    <location>
        <begin position="34"/>
        <end position="84"/>
    </location>
</feature>
<feature type="domain" description="PAS 1" evidence="3">
    <location>
        <begin position="107"/>
        <end position="177"/>
    </location>
</feature>
<feature type="domain" description="PAS 2" evidence="3">
    <location>
        <begin position="262"/>
        <end position="332"/>
    </location>
</feature>
<feature type="domain" description="PAC">
    <location>
        <begin position="336"/>
        <end position="379"/>
    </location>
</feature>
<feature type="region of interest" description="Interaction with NR3C1" evidence="2">
    <location>
        <begin position="371"/>
        <end position="845"/>
    </location>
</feature>
<feature type="region of interest" description="Disordered" evidence="5">
    <location>
        <begin position="392"/>
        <end position="411"/>
    </location>
</feature>
<feature type="region of interest" description="Disordered" evidence="5">
    <location>
        <begin position="420"/>
        <end position="495"/>
    </location>
</feature>
<feature type="region of interest" description="Interaction with SIRT1" evidence="2">
    <location>
        <begin position="450"/>
        <end position="570"/>
    </location>
</feature>
<feature type="region of interest" description="Implicated in the circadian rhythmicity" evidence="1">
    <location>
        <begin position="514"/>
        <end position="564"/>
    </location>
</feature>
<feature type="region of interest" description="Disordered" evidence="5">
    <location>
        <begin position="624"/>
        <end position="654"/>
    </location>
</feature>
<feature type="region of interest" description="Disordered" evidence="5">
    <location>
        <begin position="764"/>
        <end position="783"/>
    </location>
</feature>
<feature type="region of interest" description="Disordered" evidence="5">
    <location>
        <begin position="811"/>
        <end position="846"/>
    </location>
</feature>
<feature type="short sequence motif" description="Nuclear localization signal" evidence="2">
    <location>
        <begin position="32"/>
        <end position="47"/>
    </location>
</feature>
<feature type="compositionally biased region" description="Polar residues" evidence="5">
    <location>
        <begin position="447"/>
        <end position="463"/>
    </location>
</feature>
<feature type="compositionally biased region" description="Low complexity" evidence="5">
    <location>
        <begin position="478"/>
        <end position="493"/>
    </location>
</feature>
<feature type="compositionally biased region" description="Low complexity" evidence="5">
    <location>
        <begin position="624"/>
        <end position="637"/>
    </location>
</feature>
<feature type="compositionally biased region" description="Low complexity" evidence="5">
    <location>
        <begin position="644"/>
        <end position="654"/>
    </location>
</feature>
<feature type="compositionally biased region" description="Low complexity" evidence="5">
    <location>
        <begin position="811"/>
        <end position="829"/>
    </location>
</feature>
<feature type="site" description="Interaction with E-box DNA" evidence="18">
    <location>
        <position position="39"/>
    </location>
</feature>
<feature type="site" description="Interaction with E-box DNA" evidence="18">
    <location>
        <position position="43"/>
    </location>
</feature>
<feature type="site" description="Interaction with E-box DNA" evidence="18">
    <location>
        <position position="47"/>
    </location>
</feature>
<feature type="site" description="Important for interaction with BMAL1" evidence="18">
    <location>
        <position position="84"/>
    </location>
</feature>
<feature type="modified residue" description="Phosphoserine" evidence="2">
    <location>
        <position position="38"/>
    </location>
</feature>
<feature type="modified residue" description="Phosphoserine" evidence="2">
    <location>
        <position position="42"/>
    </location>
</feature>
<feature type="modified residue" description="Phosphoserine" evidence="2">
    <location>
        <position position="408"/>
    </location>
</feature>
<feature type="modified residue" description="Phosphoserine; by GSK3-beta" evidence="2">
    <location>
        <position position="427"/>
    </location>
</feature>
<feature type="modified residue" description="Phosphoserine" evidence="2">
    <location>
        <position position="431"/>
    </location>
</feature>
<feature type="modified residue" description="Phosphothreonine; by CDK5" evidence="21">
    <location>
        <position position="451"/>
    </location>
</feature>
<feature type="modified residue" description="Phosphothreonine; by CDK5" evidence="21">
    <location>
        <position position="461"/>
    </location>
</feature>
<feature type="cross-link" description="Glycyl lysine isopeptide (Lys-Gly) (interchain with G-Cter in SUMO1)" evidence="2">
    <location>
        <position position="67"/>
    </location>
</feature>
<feature type="cross-link" description="Glycyl lysine isopeptide (Lys-Gly) (interchain with G-Cter in SUMO1)" evidence="2">
    <location>
        <position position="842"/>
    </location>
</feature>
<feature type="sequence variant" id="VAR_040061" description="In dbSNP:rs34897046.">
    <original>S</original>
    <variation>C</variation>
    <location>
        <position position="208"/>
    </location>
</feature>
<feature type="sequence variant" id="VAR_040062" description="In dbSNP:rs1056478.">
    <original>E</original>
    <variation>K</variation>
    <location>
        <position position="380"/>
    </location>
</feature>
<feature type="sequence variant" id="VAR_029076" description="In dbSNP:rs6855837.">
    <original>L</original>
    <variation>I</variation>
    <location>
        <position position="395"/>
    </location>
</feature>
<feature type="sequence variant" id="VAR_029077" description="In dbSNP:rs3762836.">
    <original>H</original>
    <variation>R</variation>
    <location>
        <position position="542"/>
    </location>
</feature>
<feature type="mutagenesis site" description="Phosphomimetic mutant with no effect on DNA binding or CLOCK-BMAL1 transcriptional activity." evidence="18">
    <original>S</original>
    <variation>E</variation>
    <location>
        <position position="38"/>
    </location>
</feature>
<feature type="mutagenesis site" description="Phosphomimetic mutant with no effect on DNA binding or CLOCK-BMAL1 transcriptional activity." evidence="18">
    <original>S</original>
    <variation>E</variation>
    <location>
        <position position="42"/>
    </location>
</feature>
<feature type="mutagenesis site" description="No effect on BMAL1 binding." evidence="18">
    <original>F</original>
    <variation>M</variation>
    <location>
        <position position="50"/>
    </location>
</feature>
<feature type="mutagenesis site" description="Impaired BMAL1 binding." evidence="18">
    <original>H</original>
    <variation>L</variation>
    <location>
        <position position="84"/>
    </location>
</feature>
<feature type="mutagenesis site" description="3-fold increase in PER1 reporter activity by CLOCK-BMAL1. Some reduction of CRY1 inhibition of CLOCK-BMAL1 transcriptional activity; when associated with K-367 and L-601." evidence="9">
    <original>E</original>
    <variation>K</variation>
    <location>
        <position position="116"/>
    </location>
</feature>
<feature type="mutagenesis site" description="3-fold increase in PER1 reporter activity by CLOCK-BMAL1. Some reduction of CRY1 inhibition of CLOCK-BMAL1 transcriptional activity; when associated with L-840." evidence="9">
    <original>G</original>
    <variation>E</variation>
    <location>
        <position position="332"/>
    </location>
</feature>
<feature type="mutagenesis site" description="3-fold increase in PER1 reporter activity by CLOCK-BMAL1. Some reduction of CRY1 inhibition of CLOCK-BMAL1 transcriptional activity." evidence="9">
    <original>H</original>
    <variation>Y</variation>
    <location>
        <position position="360"/>
    </location>
</feature>
<feature type="mutagenesis site" description="3-fold increase in PER1 reporter activity by CLOCK-BMAL1. Some reduction of CRY1 inhibition of CLOCK-BMAL1 transcriptional activity; when associated with E-116 and L-601." evidence="9">
    <original>E</original>
    <variation>K</variation>
    <location>
        <position position="367"/>
    </location>
</feature>
<feature type="mutagenesis site" description="Significant loss in phosphorylation." evidence="21">
    <original>T</original>
    <variation>F</variation>
    <location>
        <position position="451"/>
    </location>
</feature>
<feature type="mutagenesis site" description="Significant loss in phosphorylation." evidence="21">
    <original>T</original>
    <variation>F</variation>
    <location>
        <position position="461"/>
    </location>
</feature>
<feature type="mutagenesis site" description="3-fold increase in PER1 reporter activity by CLOCK-BMAL1. Some reduction of CRY1 inhibition of CLOCK-BMAL1 transcriptional activity; when associated with K-116 and K-367." evidence="9">
    <original>V</original>
    <variation>L</variation>
    <location>
        <position position="601"/>
    </location>
</feature>
<feature type="mutagenesis site" description="3-fold increase in PER1 reporter activity by CLOCK-BMAL1. Some reduction of CRY1 inhibition of CLOCK-BMAL1 transcriptional activity; when associated with E-332." evidence="9">
    <original>P</original>
    <variation>L</variation>
    <location>
        <position position="840"/>
    </location>
</feature>
<feature type="sequence conflict" description="In Ref. 1; AAF13733." evidence="26" ref="1">
    <original>S</original>
    <variation>P</variation>
    <location>
        <position position="440"/>
    </location>
</feature>
<feature type="helix" evidence="27">
    <location>
        <begin position="33"/>
        <end position="58"/>
    </location>
</feature>
<feature type="strand" evidence="27">
    <location>
        <begin position="61"/>
        <end position="63"/>
    </location>
</feature>
<feature type="helix" evidence="27">
    <location>
        <begin position="70"/>
        <end position="89"/>
    </location>
</feature>
<feature type="helix" evidence="28">
    <location>
        <begin position="107"/>
        <end position="118"/>
    </location>
</feature>
<feature type="strand" evidence="28">
    <location>
        <begin position="120"/>
        <end position="126"/>
    </location>
</feature>
<feature type="strand" evidence="28">
    <location>
        <begin position="130"/>
        <end position="134"/>
    </location>
</feature>
<feature type="helix" evidence="28">
    <location>
        <begin position="138"/>
        <end position="142"/>
    </location>
</feature>
<feature type="helix" evidence="28">
    <location>
        <begin position="146"/>
        <end position="149"/>
    </location>
</feature>
<feature type="helix" evidence="28">
    <location>
        <begin position="154"/>
        <end position="156"/>
    </location>
</feature>
<feature type="helix" evidence="28">
    <location>
        <begin position="160"/>
        <end position="162"/>
    </location>
</feature>
<feature type="helix" evidence="28">
    <location>
        <begin position="163"/>
        <end position="174"/>
    </location>
</feature>
<feature type="helix" evidence="28">
    <location>
        <begin position="182"/>
        <end position="184"/>
    </location>
</feature>
<feature type="strand" evidence="28">
    <location>
        <begin position="191"/>
        <end position="198"/>
    </location>
</feature>
<feature type="strand" evidence="28">
    <location>
        <begin position="210"/>
        <end position="221"/>
    </location>
</feature>
<feature type="strand" evidence="28">
    <location>
        <begin position="249"/>
        <end position="257"/>
    </location>
</feature>
<name>CLOCK_HUMAN</name>
<dbReference type="EC" id="2.3.1.48"/>
<dbReference type="EMBL" id="AF011568">
    <property type="protein sequence ID" value="AAB83969.1"/>
    <property type="molecule type" value="mRNA"/>
</dbReference>
<dbReference type="EMBL" id="AH008440">
    <property type="protein sequence ID" value="AAF13733.1"/>
    <property type="molecule type" value="Genomic_DNA"/>
</dbReference>
<dbReference type="EMBL" id="EF015897">
    <property type="protein sequence ID" value="ABM64208.1"/>
    <property type="molecule type" value="Genomic_DNA"/>
</dbReference>
<dbReference type="EMBL" id="AB002332">
    <property type="protein sequence ID" value="BAA20792.2"/>
    <property type="status" value="ALT_INIT"/>
    <property type="molecule type" value="mRNA"/>
</dbReference>
<dbReference type="EMBL" id="AK291708">
    <property type="protein sequence ID" value="BAF84397.1"/>
    <property type="molecule type" value="mRNA"/>
</dbReference>
<dbReference type="EMBL" id="BC126157">
    <property type="protein sequence ID" value="AAI26158.1"/>
    <property type="molecule type" value="mRNA"/>
</dbReference>
<dbReference type="EMBL" id="BC126159">
    <property type="protein sequence ID" value="AAI26160.1"/>
    <property type="molecule type" value="mRNA"/>
</dbReference>
<dbReference type="EMBL" id="AB005535">
    <property type="protein sequence ID" value="BAA21774.1"/>
    <property type="molecule type" value="mRNA"/>
</dbReference>
<dbReference type="CCDS" id="CCDS3500.1"/>
<dbReference type="RefSeq" id="NP_001254772.1">
    <property type="nucleotide sequence ID" value="NM_001267843.2"/>
</dbReference>
<dbReference type="RefSeq" id="NP_004889.1">
    <property type="nucleotide sequence ID" value="NM_004898.4"/>
</dbReference>
<dbReference type="RefSeq" id="XP_005265844.1">
    <property type="nucleotide sequence ID" value="XM_005265787.3"/>
</dbReference>
<dbReference type="RefSeq" id="XP_011532711.1">
    <property type="nucleotide sequence ID" value="XM_011534409.2"/>
</dbReference>
<dbReference type="RefSeq" id="XP_011532712.1">
    <property type="nucleotide sequence ID" value="XM_011534410.3"/>
</dbReference>
<dbReference type="RefSeq" id="XP_011532713.1">
    <property type="nucleotide sequence ID" value="XM_011534411.3"/>
</dbReference>
<dbReference type="RefSeq" id="XP_016864343.1">
    <property type="nucleotide sequence ID" value="XM_017008854.2"/>
</dbReference>
<dbReference type="RefSeq" id="XP_024310052.1">
    <property type="nucleotide sequence ID" value="XM_024454284.2"/>
</dbReference>
<dbReference type="RefSeq" id="XP_047272387.1">
    <property type="nucleotide sequence ID" value="XM_047416431.1"/>
</dbReference>
<dbReference type="RefSeq" id="XP_047272388.1">
    <property type="nucleotide sequence ID" value="XM_047416432.1"/>
</dbReference>
<dbReference type="RefSeq" id="XP_047272389.1">
    <property type="nucleotide sequence ID" value="XM_047416433.1"/>
</dbReference>
<dbReference type="RefSeq" id="XP_047272390.1">
    <property type="nucleotide sequence ID" value="XM_047416434.1"/>
</dbReference>
<dbReference type="RefSeq" id="XP_047272391.1">
    <property type="nucleotide sequence ID" value="XM_047416435.1"/>
</dbReference>
<dbReference type="RefSeq" id="XP_047272392.1">
    <property type="nucleotide sequence ID" value="XM_047416436.1"/>
</dbReference>
<dbReference type="RefSeq" id="XP_047272393.1">
    <property type="nucleotide sequence ID" value="XM_047416437.1"/>
</dbReference>
<dbReference type="RefSeq" id="XP_047272394.1">
    <property type="nucleotide sequence ID" value="XM_047416438.1"/>
</dbReference>
<dbReference type="RefSeq" id="XP_047272395.1">
    <property type="nucleotide sequence ID" value="XM_047416439.1"/>
</dbReference>
<dbReference type="RefSeq" id="XP_047272396.1">
    <property type="nucleotide sequence ID" value="XM_047416440.1"/>
</dbReference>
<dbReference type="RefSeq" id="XP_054207263.1">
    <property type="nucleotide sequence ID" value="XM_054351288.1"/>
</dbReference>
<dbReference type="RefSeq" id="XP_054207264.1">
    <property type="nucleotide sequence ID" value="XM_054351289.1"/>
</dbReference>
<dbReference type="RefSeq" id="XP_054207265.1">
    <property type="nucleotide sequence ID" value="XM_054351290.1"/>
</dbReference>
<dbReference type="RefSeq" id="XP_054207266.1">
    <property type="nucleotide sequence ID" value="XM_054351291.1"/>
</dbReference>
<dbReference type="RefSeq" id="XP_054207267.1">
    <property type="nucleotide sequence ID" value="XM_054351292.1"/>
</dbReference>
<dbReference type="RefSeq" id="XP_054207268.1">
    <property type="nucleotide sequence ID" value="XM_054351293.1"/>
</dbReference>
<dbReference type="RefSeq" id="XP_054207269.1">
    <property type="nucleotide sequence ID" value="XM_054351294.1"/>
</dbReference>
<dbReference type="RefSeq" id="XP_054207270.1">
    <property type="nucleotide sequence ID" value="XM_054351295.1"/>
</dbReference>
<dbReference type="RefSeq" id="XP_054207271.1">
    <property type="nucleotide sequence ID" value="XM_054351296.1"/>
</dbReference>
<dbReference type="RefSeq" id="XP_054207272.1">
    <property type="nucleotide sequence ID" value="XM_054351297.1"/>
</dbReference>
<dbReference type="RefSeq" id="XP_054207273.1">
    <property type="nucleotide sequence ID" value="XM_054351298.1"/>
</dbReference>
<dbReference type="RefSeq" id="XP_054207274.1">
    <property type="nucleotide sequence ID" value="XM_054351299.1"/>
</dbReference>
<dbReference type="RefSeq" id="XP_054207275.1">
    <property type="nucleotide sequence ID" value="XM_054351300.1"/>
</dbReference>
<dbReference type="RefSeq" id="XP_054207276.1">
    <property type="nucleotide sequence ID" value="XM_054351301.1"/>
</dbReference>
<dbReference type="RefSeq" id="XP_054207277.1">
    <property type="nucleotide sequence ID" value="XM_054351302.1"/>
</dbReference>
<dbReference type="RefSeq" id="XP_054207278.1">
    <property type="nucleotide sequence ID" value="XM_054351303.1"/>
</dbReference>
<dbReference type="PDB" id="4H10">
    <property type="method" value="X-ray"/>
    <property type="resolution" value="2.40 A"/>
    <property type="chains" value="B=29-89"/>
</dbReference>
<dbReference type="PDB" id="6QPJ">
    <property type="method" value="X-ray"/>
    <property type="resolution" value="2.31 A"/>
    <property type="chains" value="A=105-265"/>
</dbReference>
<dbReference type="PDBsum" id="4H10"/>
<dbReference type="PDBsum" id="6QPJ"/>
<dbReference type="SMR" id="O15516"/>
<dbReference type="BioGRID" id="114944">
    <property type="interactions" value="86"/>
</dbReference>
<dbReference type="ComplexPortal" id="CPX-3229">
    <property type="entry name" value="CLOCK-BMAL1 transcription complex"/>
</dbReference>
<dbReference type="ComplexPortal" id="CPX-3230">
    <property type="entry name" value="CLOCK-BMAL2 transcription complex"/>
</dbReference>
<dbReference type="CORUM" id="O15516"/>
<dbReference type="DIP" id="DIP-46009N"/>
<dbReference type="FunCoup" id="O15516">
    <property type="interactions" value="2877"/>
</dbReference>
<dbReference type="IntAct" id="O15516">
    <property type="interactions" value="29"/>
</dbReference>
<dbReference type="MINT" id="O15516"/>
<dbReference type="STRING" id="9606.ENSP00000426983"/>
<dbReference type="GlyCosmos" id="O15516">
    <property type="glycosylation" value="1 site, 1 glycan"/>
</dbReference>
<dbReference type="GlyGen" id="O15516">
    <property type="glycosylation" value="1 site, 1 O-linked glycan (1 site)"/>
</dbReference>
<dbReference type="iPTMnet" id="O15516"/>
<dbReference type="PhosphoSitePlus" id="O15516"/>
<dbReference type="BioMuta" id="CLOCK"/>
<dbReference type="jPOST" id="O15516"/>
<dbReference type="MassIVE" id="O15516"/>
<dbReference type="PaxDb" id="9606-ENSP00000308741"/>
<dbReference type="PeptideAtlas" id="O15516"/>
<dbReference type="ProteomicsDB" id="48706"/>
<dbReference type="Antibodypedia" id="909">
    <property type="antibodies" value="532 antibodies from 41 providers"/>
</dbReference>
<dbReference type="DNASU" id="9575"/>
<dbReference type="Ensembl" id="ENST00000309964.8">
    <property type="protein sequence ID" value="ENSP00000308741.4"/>
    <property type="gene ID" value="ENSG00000134852.15"/>
</dbReference>
<dbReference type="Ensembl" id="ENST00000381322.5">
    <property type="protein sequence ID" value="ENSP00000370723.1"/>
    <property type="gene ID" value="ENSG00000134852.15"/>
</dbReference>
<dbReference type="Ensembl" id="ENST00000513440.6">
    <property type="protein sequence ID" value="ENSP00000426983.1"/>
    <property type="gene ID" value="ENSG00000134852.15"/>
</dbReference>
<dbReference type="GeneID" id="9575"/>
<dbReference type="KEGG" id="hsa:9575"/>
<dbReference type="MANE-Select" id="ENST00000513440.6">
    <property type="protein sequence ID" value="ENSP00000426983.1"/>
    <property type="RefSeq nucleotide sequence ID" value="NM_004898.4"/>
    <property type="RefSeq protein sequence ID" value="NP_004889.1"/>
</dbReference>
<dbReference type="UCSC" id="uc003haz.3">
    <property type="organism name" value="human"/>
</dbReference>
<dbReference type="AGR" id="HGNC:2082"/>
<dbReference type="CTD" id="9575"/>
<dbReference type="DisGeNET" id="9575"/>
<dbReference type="GeneCards" id="CLOCK"/>
<dbReference type="HGNC" id="HGNC:2082">
    <property type="gene designation" value="CLOCK"/>
</dbReference>
<dbReference type="HPA" id="ENSG00000134852">
    <property type="expression patterns" value="Low tissue specificity"/>
</dbReference>
<dbReference type="MIM" id="601851">
    <property type="type" value="gene"/>
</dbReference>
<dbReference type="neXtProt" id="NX_O15516"/>
<dbReference type="OpenTargets" id="ENSG00000134852"/>
<dbReference type="PharmGKB" id="PA26609"/>
<dbReference type="VEuPathDB" id="HostDB:ENSG00000134852"/>
<dbReference type="eggNOG" id="KOG3561">
    <property type="taxonomic scope" value="Eukaryota"/>
</dbReference>
<dbReference type="GeneTree" id="ENSGT00940000157580"/>
<dbReference type="HOGENOM" id="CLU_010044_2_2_1"/>
<dbReference type="InParanoid" id="O15516"/>
<dbReference type="OMA" id="HVPNSAH"/>
<dbReference type="OrthoDB" id="411251at2759"/>
<dbReference type="PAN-GO" id="O15516">
    <property type="GO annotations" value="5 GO annotations based on evolutionary models"/>
</dbReference>
<dbReference type="PhylomeDB" id="O15516"/>
<dbReference type="TreeFam" id="TF324568"/>
<dbReference type="BRENDA" id="2.3.1.48">
    <property type="organism ID" value="2681"/>
</dbReference>
<dbReference type="PathwayCommons" id="O15516"/>
<dbReference type="Reactome" id="R-HSA-1368108">
    <property type="pathway name" value="BMAL1:CLOCK,NPAS2 activates circadian gene expression"/>
</dbReference>
<dbReference type="Reactome" id="R-HSA-1989781">
    <property type="pathway name" value="PPARA activates gene expression"/>
</dbReference>
<dbReference type="Reactome" id="R-HSA-3214847">
    <property type="pathway name" value="HATs acetylate histones"/>
</dbReference>
<dbReference type="Reactome" id="R-HSA-400253">
    <property type="pathway name" value="Circadian Clock"/>
</dbReference>
<dbReference type="Reactome" id="R-HSA-9707616">
    <property type="pathway name" value="Heme signaling"/>
</dbReference>
<dbReference type="SignaLink" id="O15516"/>
<dbReference type="SIGNOR" id="O15516"/>
<dbReference type="BioGRID-ORCS" id="9575">
    <property type="hits" value="12 hits in 1187 CRISPR screens"/>
</dbReference>
<dbReference type="ChiTaRS" id="CLOCK">
    <property type="organism name" value="human"/>
</dbReference>
<dbReference type="EvolutionaryTrace" id="O15516"/>
<dbReference type="GeneWiki" id="CLOCK"/>
<dbReference type="GenomeRNAi" id="9575"/>
<dbReference type="Pharos" id="O15516">
    <property type="development level" value="Tbio"/>
</dbReference>
<dbReference type="PRO" id="PR:O15516"/>
<dbReference type="Proteomes" id="UP000005640">
    <property type="component" value="Chromosome 4"/>
</dbReference>
<dbReference type="RNAct" id="O15516">
    <property type="molecule type" value="protein"/>
</dbReference>
<dbReference type="Bgee" id="ENSG00000134852">
    <property type="expression patterns" value="Expressed in secondary oocyte and 211 other cell types or tissues"/>
</dbReference>
<dbReference type="ExpressionAtlas" id="O15516">
    <property type="expression patterns" value="baseline and differential"/>
</dbReference>
<dbReference type="GO" id="GO:0000785">
    <property type="term" value="C:chromatin"/>
    <property type="evidence" value="ECO:0000247"/>
    <property type="project" value="NTNU_SB"/>
</dbReference>
<dbReference type="GO" id="GO:0033391">
    <property type="term" value="C:chromatoid body"/>
    <property type="evidence" value="ECO:0000250"/>
    <property type="project" value="UniProtKB"/>
</dbReference>
<dbReference type="GO" id="GO:0005694">
    <property type="term" value="C:chromosome"/>
    <property type="evidence" value="ECO:0000314"/>
    <property type="project" value="UniProtKB"/>
</dbReference>
<dbReference type="GO" id="GO:1990513">
    <property type="term" value="C:CLOCK-BMAL transcription complex"/>
    <property type="evidence" value="ECO:0000353"/>
    <property type="project" value="ComplexPortal"/>
</dbReference>
<dbReference type="GO" id="GO:0005829">
    <property type="term" value="C:cytosol"/>
    <property type="evidence" value="ECO:0000314"/>
    <property type="project" value="UniProtKB"/>
</dbReference>
<dbReference type="GO" id="GO:0043231">
    <property type="term" value="C:intracellular membrane-bounded organelle"/>
    <property type="evidence" value="ECO:0000314"/>
    <property type="project" value="HPA"/>
</dbReference>
<dbReference type="GO" id="GO:0005654">
    <property type="term" value="C:nucleoplasm"/>
    <property type="evidence" value="ECO:0000314"/>
    <property type="project" value="HPA"/>
</dbReference>
<dbReference type="GO" id="GO:0005634">
    <property type="term" value="C:nucleus"/>
    <property type="evidence" value="ECO:0000314"/>
    <property type="project" value="UniProtKB"/>
</dbReference>
<dbReference type="GO" id="GO:0031490">
    <property type="term" value="F:chromatin DNA binding"/>
    <property type="evidence" value="ECO:0000250"/>
    <property type="project" value="UniProtKB"/>
</dbReference>
<dbReference type="GO" id="GO:0003677">
    <property type="term" value="F:DNA binding"/>
    <property type="evidence" value="ECO:0000314"/>
    <property type="project" value="UniProtKB"/>
</dbReference>
<dbReference type="GO" id="GO:0001228">
    <property type="term" value="F:DNA-binding transcription activator activity, RNA polymerase II-specific"/>
    <property type="evidence" value="ECO:0000250"/>
    <property type="project" value="BHF-UCL"/>
</dbReference>
<dbReference type="GO" id="GO:0003700">
    <property type="term" value="F:DNA-binding transcription factor activity"/>
    <property type="evidence" value="ECO:0000250"/>
    <property type="project" value="UniProtKB"/>
</dbReference>
<dbReference type="GO" id="GO:0000981">
    <property type="term" value="F:DNA-binding transcription factor activity, RNA polymerase II-specific"/>
    <property type="evidence" value="ECO:0000250"/>
    <property type="project" value="BHF-UCL"/>
</dbReference>
<dbReference type="GO" id="GO:0070888">
    <property type="term" value="F:E-box binding"/>
    <property type="evidence" value="ECO:0000314"/>
    <property type="project" value="UniProtKB"/>
</dbReference>
<dbReference type="GO" id="GO:0004402">
    <property type="term" value="F:histone acetyltransferase activity"/>
    <property type="evidence" value="ECO:0000315"/>
    <property type="project" value="UniProtKB"/>
</dbReference>
<dbReference type="GO" id="GO:0046983">
    <property type="term" value="F:protein dimerization activity"/>
    <property type="evidence" value="ECO:0007669"/>
    <property type="project" value="InterPro"/>
</dbReference>
<dbReference type="GO" id="GO:0000978">
    <property type="term" value="F:RNA polymerase II cis-regulatory region sequence-specific DNA binding"/>
    <property type="evidence" value="ECO:0000314"/>
    <property type="project" value="BHF-UCL"/>
</dbReference>
<dbReference type="GO" id="GO:0043565">
    <property type="term" value="F:sequence-specific DNA binding"/>
    <property type="evidence" value="ECO:0000250"/>
    <property type="project" value="UniProtKB"/>
</dbReference>
<dbReference type="GO" id="GO:1990837">
    <property type="term" value="F:sequence-specific double-stranded DNA binding"/>
    <property type="evidence" value="ECO:0000314"/>
    <property type="project" value="ARUK-UCL"/>
</dbReference>
<dbReference type="GO" id="GO:0071479">
    <property type="term" value="P:cellular response to ionizing radiation"/>
    <property type="evidence" value="ECO:0000314"/>
    <property type="project" value="UniProtKB"/>
</dbReference>
<dbReference type="GO" id="GO:0032922">
    <property type="term" value="P:circadian regulation of gene expression"/>
    <property type="evidence" value="ECO:0000314"/>
    <property type="project" value="UniProtKB"/>
</dbReference>
<dbReference type="GO" id="GO:0007623">
    <property type="term" value="P:circadian rhythm"/>
    <property type="evidence" value="ECO:0000304"/>
    <property type="project" value="ProtInc"/>
</dbReference>
<dbReference type="GO" id="GO:0000077">
    <property type="term" value="P:DNA damage checkpoint signaling"/>
    <property type="evidence" value="ECO:0000315"/>
    <property type="project" value="UniProtKB"/>
</dbReference>
<dbReference type="GO" id="GO:0045892">
    <property type="term" value="P:negative regulation of DNA-templated transcription"/>
    <property type="evidence" value="ECO:0000250"/>
    <property type="project" value="UniProtKB"/>
</dbReference>
<dbReference type="GO" id="GO:2000323">
    <property type="term" value="P:negative regulation of nuclear receptor-mediated glucocorticoid signaling pathway"/>
    <property type="evidence" value="ECO:0000250"/>
    <property type="project" value="UniProtKB"/>
</dbReference>
<dbReference type="GO" id="GO:0009648">
    <property type="term" value="P:photoperiodism"/>
    <property type="evidence" value="ECO:0000304"/>
    <property type="project" value="ProtInc"/>
</dbReference>
<dbReference type="GO" id="GO:0042753">
    <property type="term" value="P:positive regulation of circadian rhythm"/>
    <property type="evidence" value="ECO:0000314"/>
    <property type="project" value="ComplexPortal"/>
</dbReference>
<dbReference type="GO" id="GO:0045893">
    <property type="term" value="P:positive regulation of DNA-templated transcription"/>
    <property type="evidence" value="ECO:0000314"/>
    <property type="project" value="UniProtKB"/>
</dbReference>
<dbReference type="GO" id="GO:0050729">
    <property type="term" value="P:positive regulation of inflammatory response"/>
    <property type="evidence" value="ECO:0007669"/>
    <property type="project" value="Ensembl"/>
</dbReference>
<dbReference type="GO" id="GO:0051092">
    <property type="term" value="P:positive regulation of NF-kappaB transcription factor activity"/>
    <property type="evidence" value="ECO:0000250"/>
    <property type="project" value="UniProtKB"/>
</dbReference>
<dbReference type="GO" id="GO:0043161">
    <property type="term" value="P:proteasome-mediated ubiquitin-dependent protein catabolic process"/>
    <property type="evidence" value="ECO:0000250"/>
    <property type="project" value="UniProtKB"/>
</dbReference>
<dbReference type="GO" id="GO:0006473">
    <property type="term" value="P:protein acetylation"/>
    <property type="evidence" value="ECO:0000314"/>
    <property type="project" value="UniProtKB"/>
</dbReference>
<dbReference type="GO" id="GO:0042752">
    <property type="term" value="P:regulation of circadian rhythm"/>
    <property type="evidence" value="ECO:0000250"/>
    <property type="project" value="UniProtKB"/>
</dbReference>
<dbReference type="GO" id="GO:0006355">
    <property type="term" value="P:regulation of DNA-templated transcription"/>
    <property type="evidence" value="ECO:0000250"/>
    <property type="project" value="UniProtKB"/>
</dbReference>
<dbReference type="GO" id="GO:0042634">
    <property type="term" value="P:regulation of hair cycle"/>
    <property type="evidence" value="ECO:0000315"/>
    <property type="project" value="UniProtKB"/>
</dbReference>
<dbReference type="GO" id="GO:0050796">
    <property type="term" value="P:regulation of insulin secretion"/>
    <property type="evidence" value="ECO:0000250"/>
    <property type="project" value="UniProtKB"/>
</dbReference>
<dbReference type="GO" id="GO:0006357">
    <property type="term" value="P:regulation of transcription by RNA polymerase II"/>
    <property type="evidence" value="ECO:0000318"/>
    <property type="project" value="GO_Central"/>
</dbReference>
<dbReference type="GO" id="GO:2000074">
    <property type="term" value="P:regulation of type B pancreatic cell development"/>
    <property type="evidence" value="ECO:0000250"/>
    <property type="project" value="UniProtKB"/>
</dbReference>
<dbReference type="GO" id="GO:0051775">
    <property type="term" value="P:response to redox state"/>
    <property type="evidence" value="ECO:0000314"/>
    <property type="project" value="UniProtKB"/>
</dbReference>
<dbReference type="GO" id="GO:0007165">
    <property type="term" value="P:signal transduction"/>
    <property type="evidence" value="ECO:0000304"/>
    <property type="project" value="ProtInc"/>
</dbReference>
<dbReference type="GO" id="GO:0007283">
    <property type="term" value="P:spermatogenesis"/>
    <property type="evidence" value="ECO:0000250"/>
    <property type="project" value="UniProtKB"/>
</dbReference>
<dbReference type="CDD" id="cd19734">
    <property type="entry name" value="bHLH-PAS_CLOCK"/>
    <property type="match status" value="1"/>
</dbReference>
<dbReference type="CDD" id="cd00130">
    <property type="entry name" value="PAS"/>
    <property type="match status" value="2"/>
</dbReference>
<dbReference type="FunFam" id="3.30.450.20:FF:000016">
    <property type="entry name" value="Circadian locomoter output cycles protein"/>
    <property type="match status" value="1"/>
</dbReference>
<dbReference type="FunFam" id="4.10.280.10:FF:000013">
    <property type="entry name" value="Circadian locomoter output cycles protein kaput"/>
    <property type="match status" value="1"/>
</dbReference>
<dbReference type="FunFam" id="3.30.450.20:FF:000022">
    <property type="entry name" value="circadian locomoter output cycles protein kaput"/>
    <property type="match status" value="1"/>
</dbReference>
<dbReference type="Gene3D" id="4.10.280.10">
    <property type="entry name" value="Helix-loop-helix DNA-binding domain"/>
    <property type="match status" value="1"/>
</dbReference>
<dbReference type="Gene3D" id="3.30.450.20">
    <property type="entry name" value="PAS domain"/>
    <property type="match status" value="2"/>
</dbReference>
<dbReference type="IDEAL" id="IID00430"/>
<dbReference type="InterPro" id="IPR011598">
    <property type="entry name" value="bHLH_dom"/>
</dbReference>
<dbReference type="InterPro" id="IPR047230">
    <property type="entry name" value="CLOCK-like"/>
</dbReference>
<dbReference type="InterPro" id="IPR036638">
    <property type="entry name" value="HLH_DNA-bd_sf"/>
</dbReference>
<dbReference type="InterPro" id="IPR001067">
    <property type="entry name" value="Nuc_translocat"/>
</dbReference>
<dbReference type="InterPro" id="IPR001610">
    <property type="entry name" value="PAC"/>
</dbReference>
<dbReference type="InterPro" id="IPR000014">
    <property type="entry name" value="PAS"/>
</dbReference>
<dbReference type="InterPro" id="IPR035965">
    <property type="entry name" value="PAS-like_dom_sf"/>
</dbReference>
<dbReference type="InterPro" id="IPR013767">
    <property type="entry name" value="PAS_fold"/>
</dbReference>
<dbReference type="PANTHER" id="PTHR46055">
    <property type="entry name" value="CIRCADIAN LOCOMOTER OUTPUT CYCLES PROTEIN KAPUT"/>
    <property type="match status" value="1"/>
</dbReference>
<dbReference type="PANTHER" id="PTHR46055:SF2">
    <property type="entry name" value="CIRCADIAN LOCOMOTER OUTPUT CYCLES PROTEIN KAPUT"/>
    <property type="match status" value="1"/>
</dbReference>
<dbReference type="Pfam" id="PF00010">
    <property type="entry name" value="HLH"/>
    <property type="match status" value="1"/>
</dbReference>
<dbReference type="Pfam" id="PF00989">
    <property type="entry name" value="PAS"/>
    <property type="match status" value="1"/>
</dbReference>
<dbReference type="Pfam" id="PF14598">
    <property type="entry name" value="PAS_11"/>
    <property type="match status" value="1"/>
</dbReference>
<dbReference type="PRINTS" id="PR00785">
    <property type="entry name" value="NCTRNSLOCATR"/>
</dbReference>
<dbReference type="SMART" id="SM00353">
    <property type="entry name" value="HLH"/>
    <property type="match status" value="1"/>
</dbReference>
<dbReference type="SMART" id="SM00086">
    <property type="entry name" value="PAC"/>
    <property type="match status" value="1"/>
</dbReference>
<dbReference type="SMART" id="SM00091">
    <property type="entry name" value="PAS"/>
    <property type="match status" value="2"/>
</dbReference>
<dbReference type="SUPFAM" id="SSF47459">
    <property type="entry name" value="HLH, helix-loop-helix DNA-binding domain"/>
    <property type="match status" value="1"/>
</dbReference>
<dbReference type="SUPFAM" id="SSF55785">
    <property type="entry name" value="PYP-like sensor domain (PAS domain)"/>
    <property type="match status" value="2"/>
</dbReference>
<dbReference type="PROSITE" id="PS50888">
    <property type="entry name" value="BHLH"/>
    <property type="match status" value="1"/>
</dbReference>
<dbReference type="PROSITE" id="PS50112">
    <property type="entry name" value="PAS"/>
    <property type="match status" value="2"/>
</dbReference>
<comment type="function">
    <text evidence="2 8 10 13 15 16 18 19 20 24">Transcriptional activator which forms a core component of the circadian clock. The circadian clock, an internal time-keeping system, regulates various physiological processes through the generation of approximately 24 hour circadian rhythms in gene expression, which are translated into rhythms in metabolism and behavior. It is derived from the Latin roots 'circa' (about) and 'diem' (day) and acts as an important regulator of a wide array of physiological functions including metabolism, sleep, body temperature, blood pressure, endocrine, immune, cardiovascular, and renal function. Consists of two major components: the central clock, residing in the suprachiasmatic nucleus (SCN) of the brain, and the peripheral clocks that are present in nearly every tissue and organ system. Both the central and peripheral clocks can be reset by environmental cues, also known as Zeitgebers (German for 'timegivers'). The predominant Zeitgeber for the central clock is light, which is sensed by retina and signals directly to the SCN. The central clock entrains the peripheral clocks through neuronal and hormonal signals, body temperature and feeding-related cues, aligning all clocks with the external light/dark cycle. Circadian rhythms allow an organism to achieve temporal homeostasis with its environment at the molecular level by regulating gene expression to create a peak of protein expression once every 24 hours to control when a particular physiological process is most active with respect to the solar day. Transcription and translation of core clock components (CLOCK, NPAS2, BMAL1, BMAL2, PER1, PER2, PER3, CRY1 and CRY2) plays a critical role in rhythm generation, whereas delays imposed by post-translational modifications (PTMs) are important for determining the period (tau) of the rhythms (tau refers to the period of a rhythm and is the length, in time, of one complete cycle). A diurnal rhythm is synchronized with the day/night cycle, while the ultradian and infradian rhythms have a period shorter and longer than 24 hours, respectively. Disruptions in the circadian rhythms contribute to the pathology of cardiovascular diseases, cancer, metabolic syndromes and aging. A transcription/translation feedback loop (TTFL) forms the core of the molecular circadian clock mechanism. Transcription factors, CLOCK or NPAS2 and BMAL1 or BMAL2, form the positive limb of the feedback loop, act in the form of a heterodimer and activate the transcription of core clock genes and clock-controlled genes (involved in key metabolic processes), harboring E-box elements (5'-CACGTG-3') within their promoters. The core clock genes: PER1/2/3 and CRY1/2 which are transcriptional repressors form the negative limb of the feedback loop and interact with the CLOCK|NPAS2-BMAL1|BMAL2 heterodimer inhibiting its activity and thereby negatively regulating their own expression. This heterodimer also activates nuclear receptors NR1D1/2 and RORA/B/G, which form a second feedback loop and which activate and repress BMAL1 transcription, respectively. Regulates the circadian expression of ICAM1, VCAM1, CCL2, THPO and MPL and also acts as an enhancer of the transactivation potential of NF-kappaB. Plays an important role in the homeostatic regulation of sleep. The CLOCK-BMAL1 heterodimer regulates the circadian expression of SERPINE1/PAI1, VWF, B3, CCRN4L/NOC, NAMPT, DBP, MYOD1, PPARGC1A, PPARGC1B, SIRT1, GYS2, F7, NGFR, GNRHR, BHLHE40/DEC1, ATF4, MTA1, KLF10 and also genes implicated in glucose and lipid metabolism. Promotes rhythmic chromatin opening, regulating the DNA accessibility of other transcription factors. The CLOCK-BMAL2 heterodimer activates the transcription of SERPINE1/PAI1 and BHLHE40/DEC1. The preferred binding motif for the CLOCK-BMAL1 heterodimer is 5'-CACGTGA-3', which contains a flanking adenine nucleotide at the 3-prime end of the canonical 6-nucleotide E-box sequence (PubMed:23229515). CLOCK specifically binds to the half-site 5'-CAC-3', while BMAL1 binds to the half-site 5'-GTGA-3' (PubMed:23229515). The CLOCK-BMAL1 heterodimer also recognizes the non-canonical E-box motifs 5'-AACGTGA-3' and 5'-CATGTGA-3' (PubMed:23229515). CLOCK has an intrinsic acetyltransferase activity, which enables circadian chromatin remodeling by acetylating histones and nonhistone proteins, including its own partner BMAL1. Represses glucocorticoid receptor NR3C1/GR-induced transcriptional activity by reducing the association of NR3C1/GR to glucocorticoid response elements (GREs) via the acetylation of multiple lysine residues located in its hinge region (PubMed:21980503). The acetyltransferase activity of CLOCK is as important as its transcription activity in circadian control. Acetylates metabolic enzymes IMPDH2 and NDUFA9 in a circadian manner. Facilitated by BMAL1, rhythmically interacts and acetylates argininosuccinate synthase 1 (ASS1) leading to enzymatic inhibition of ASS1 as well as the circadian oscillation of arginine biosynthesis and subsequent ureagenesis (PubMed:28985504). Drives the circadian rhythm of blood pressure through transcriptional activation of ATP1B1 (By similarity).</text>
</comment>
<comment type="catalytic activity">
    <reaction>
        <text>L-lysyl-[protein] + acetyl-CoA = N(6)-acetyl-L-lysyl-[protein] + CoA + H(+)</text>
        <dbReference type="Rhea" id="RHEA:45948"/>
        <dbReference type="Rhea" id="RHEA-COMP:9752"/>
        <dbReference type="Rhea" id="RHEA-COMP:10731"/>
        <dbReference type="ChEBI" id="CHEBI:15378"/>
        <dbReference type="ChEBI" id="CHEBI:29969"/>
        <dbReference type="ChEBI" id="CHEBI:57287"/>
        <dbReference type="ChEBI" id="CHEBI:57288"/>
        <dbReference type="ChEBI" id="CHEBI:61930"/>
        <dbReference type="EC" id="2.3.1.48"/>
    </reaction>
</comment>
<comment type="activity regulation">
    <text evidence="7 18">There is conflicting data about the effect of NAD cofactors on activity. PubMed:11441146 suggests that the redox state of the cell can modulate the transcriptional activity of the CLOCK-BMAL1 heterodimer; NADH and NADPH enhance the DNA-binding activity of the heterodimer. PubMed:23229515 reports that NADH and NADPH have no significant effect on DNA-binding activity of the CLOCK-BMAL1 heterodimer.</text>
</comment>
<comment type="subunit">
    <text evidence="2 8 11 12 14 15 17 18 21 22 23 24 25">Component of the circadian clock oscillator which includes the CRY proteins, CLOCK or NPAS2, BMAL1 or BMAL2, CSNK1D and/or CSNK1E, TIMELESS and the PER proteins (By similarity). Interacts with KMT2A; in a circadian manner (By similarity). Forms a heterodimer with BMAL1 (PubMed:21613214, PubMed:23229515). The CLOCK-BMAL1 heterodimer is required for E-box-dependent transactivation, for CLOCK nuclear translocation and degradation, and for phosphorylation of both CLOCK and BMAL1 (By similarity). Interacts with NR3C1 in a ligand-dependent fashion (PubMed:21980503). Interacts with ESR1 and estrogen stimulates this interaction (PubMed:23160374). Interacts with the complex p35/CDK5 (PubMed:24235147). Interacts with RELA/p65 (By similarity). Interacts with KAT2B, CREBBP, EP300 (PubMed:14645221). Interacts with ID1 and ID3 (By similarity). Interacts with ID2 (PubMed:20861012). Interacts with MTA1 (By similarity). Interacts with OGA (By similarity). Interacts with SIRT1 (By similarity). Interacts with CIPC (By similarity). Interacts with EZH2 (By similarity). Interacts with EIF4E, PIWIL1 and DDX4 (By similarity). Interacts with PER2 and CRY1 and the interaction with PER and CRY proteins requires translocation to the nucleus. Interacts with PER1 and CRY2 (By similarity). Interaction of the CLOCK-BMAL1 heterodimer with PER or CRY inhibits transcription activation (PubMed:21613214). Interaction of the CLOCK-BMAL1 with CRY1 is independent of DNA but with PER2 is off DNA (PubMed:21613214). The CLOCK-BMAL1 heterodimer interacts with GSK3B. Interacts with KDM5A (PubMed:21960634). Interacts with MYBBP1A (By similarity). Interacts with THRAP3 (By similarity). Interacts with MED1; this interaction requires the presence of THRAP3 (By similarity). Interacts with NCOA2 (By similarity). The CLOCK-BMAL1 heterodimer interacts with PASD1 (PubMed:25936801). Interacts with ASS1 and IMPDH2; in a circadian manner (PubMed:28985504). Interacts with NDUFA9 (PubMed:28985504). Interacts with PIWIL2 (via PIWI domain) (PubMed:28903391). Interacts with HNF4A (PubMed:30530698).</text>
</comment>
<comment type="interaction">
    <interactant intactId="EBI-1794265">
        <id>O15516</id>
    </interactant>
    <interactant intactId="EBI-1794206">
        <id>O00327</id>
        <label>BMAL1</label>
    </interactant>
    <organismsDiffer>false</organismsDiffer>
    <experiments>6</experiments>
</comment>
<comment type="interaction">
    <interactant intactId="EBI-1794265">
        <id>O15516</id>
    </interactant>
    <interactant intactId="EBI-11991546">
        <id>O00327-8</id>
        <label>BMAL1</label>
    </interactant>
    <organismsDiffer>false</organismsDiffer>
    <experiments>6</experiments>
</comment>
<comment type="interaction">
    <interactant intactId="EBI-1794265">
        <id>O15516</id>
    </interactant>
    <interactant intactId="EBI-1793513">
        <id>Q8WYA1</id>
        <label>BMAL2</label>
    </interactant>
    <organismsDiffer>false</organismsDiffer>
    <experiments>4</experiments>
</comment>
<comment type="interaction">
    <interactant intactId="EBI-1794265">
        <id>O15516</id>
    </interactant>
    <interactant intactId="EBI-12268276">
        <id>Q8WYA1-3</id>
        <label>BMAL2</label>
    </interactant>
    <organismsDiffer>false</organismsDiffer>
    <experiments>4</experiments>
</comment>
<comment type="subcellular location">
    <subcellularLocation>
        <location evidence="8 17 24">Nucleus</location>
    </subcellularLocation>
    <subcellularLocation>
        <location evidence="2">Cytoplasm</location>
    </subcellularLocation>
    <subcellularLocation>
        <location evidence="24">Cytoplasm</location>
        <location evidence="24">Cytosol</location>
    </subcellularLocation>
    <text evidence="2 13">Shuttling between the cytoplasm and the nucleus is under circadian regulation and is BMAL1-dependent. Phosphorylated form located in the nucleus while the nonphosphorylated form found only in the cytoplasm. Sequestered to the cytoplasm in the presence of ID2 (By similarity). Localizes to sites of DNA damage in a H2AX-independent manner.</text>
</comment>
<comment type="tissue specificity">
    <text evidence="6 20">Hair follicles (at protein level). Expressed in all tissues examined including spleen, thymus, prostate, testis, ovary, small intestine, colon, leukocytes, heart, brain, placenta, lung, liver, skeletal muscle, kidney and pancreas. Highest levels in testis and skeletal muscle. Low levels in thymus, lung and liver. Expressed in all brain regions with highest levels in cerebellum. Highly expressed in the suprachiasmatic nucleus (SCN).</text>
</comment>
<comment type="PTM">
    <text evidence="2">Ubiquitinated, leading to its proteasomal degradation.</text>
</comment>
<comment type="PTM">
    <text evidence="2">O-glycosylated; contains O-GlcNAc. O-glycosylation by OGT prevents protein degradation by inhibiting ubiquitination. It also stabilizes the CLOCK-BMAL1 heterodimer thereby increasing CLOCK-BMAL1-mediated transcriptional activation of PER1/2/3 and CRY1/2.</text>
</comment>
<comment type="PTM">
    <text evidence="21">Phosphorylation is dependent on the CLOCK-BMAL1 heterodimer formation. Phosphorylation enhances the transcriptional activity, alters the subcellular localization and decreases the stability of the heterodimer by promoting its degradation. Phosphorylation shows circadian variations in the liver. May be phosphorylated by CSNK1D and CKSN1E.</text>
</comment>
<comment type="PTM">
    <text evidence="17">Sumoylation enhances its transcriptional activity and interaction with ESR1, resulting in up-regulation of ESR1 activity. Estrogen stimulates sumoylation. Desumoylation by SENP1 negatively regulates its transcriptional activity. Sumoylation stimulates cell proliferation and increases the proportion of S phase cells in breast cancer cell lines.</text>
</comment>
<comment type="PTM">
    <text evidence="2">Undergoes lysosome-mediated degradation in a time-dependent manner in the liver.</text>
</comment>
<comment type="miscellaneous">
    <text>CLOCK-BMAL1 double mutations within the PAS domains result in synergistic desensitization to high levels of CRY on repression of CLOCK-BMAL1 transcriptional activity of PER1 and disrupt circadian rhythmicity.</text>
</comment>
<comment type="sequence caution" evidence="26">
    <conflict type="erroneous initiation">
        <sequence resource="EMBL-CDS" id="BAA20792"/>
    </conflict>
    <text>Extended N-terminus.</text>
</comment>
<accession>O15516</accession>
<accession>A0AV01</accession>
<accession>A2I2N9</accession>
<accession>O14516</accession>
<accession>Q9UIT8</accession>
<organism>
    <name type="scientific">Homo sapiens</name>
    <name type="common">Human</name>
    <dbReference type="NCBI Taxonomy" id="9606"/>
    <lineage>
        <taxon>Eukaryota</taxon>
        <taxon>Metazoa</taxon>
        <taxon>Chordata</taxon>
        <taxon>Craniata</taxon>
        <taxon>Vertebrata</taxon>
        <taxon>Euteleostomi</taxon>
        <taxon>Mammalia</taxon>
        <taxon>Eutheria</taxon>
        <taxon>Euarchontoglires</taxon>
        <taxon>Primates</taxon>
        <taxon>Haplorrhini</taxon>
        <taxon>Catarrhini</taxon>
        <taxon>Hominidae</taxon>
        <taxon>Homo</taxon>
    </lineage>
</organism>
<gene>
    <name type="primary">CLOCK</name>
    <name type="synonym">BHLHE8</name>
    <name type="synonym">KIAA0334</name>
</gene>
<sequence>MLFTVSCSKMSSIVDRDDSSIFDGLVEEDDKDKAKRVSRNKSEKKRRDQFNVLIKELGSMLPGNARKMDKSTVLQKSIDFLRKHKEITAQSDASEIRQDWKPTFLSNEEFTQLMLEALDGFFLAIMTDGSIIYVSESVTSLLEHLPSDLVDQSIFNFIPEGEHSEVYKILSTHLLESDSLTPEYLKSKNQLEFCCHMLRGTIDPKEPSTYEYVKFIGNFKSLNSVSSSAHNGFEGTIQRTHRPSYEDRVCFVATVRLATPQFIKEMCTVEEPNEEFTSRHSLEWKFLFLDHRAPPIIGYLPFEVLGTSGYDYYHVDDLENLAKCHEHLMQYGKGKSCYYRFLTKGQQWIWLQTHYYITYHQWNSRPEFIVCTHTVVSYAEVRAERRRELGIEESLPETAADKSQDSGSDNRINTVSLKEALERFDHSPTPSASSRSSRKSSHTAVSDPSSTPTKIPTDTSTPPRQHLPAHEKMVQRRSSFSSQSINSQSVGSSLTQPVMSQATNLPIPQGMSQFQFSAQLGAMQHLKDQLEQRTRMIEANIHRQQEELRKIQEQLQMVHGQGLQMFLQQSNPGLNFGSVQLSSGNSSNIQQLAPINMQGQVVPTNQIQSGMNTGHIGTTQHMIQQQTLQSTSTQSQQNVLSGHSQQTSLPSQTQSTLTAPLYNTMVISQPAAGSMVQIPSSMPQNSTQSAAVTTFTQDRQIRFSQGQQLVTKLVTAPVACGAVMVPSTMLMGQVVTAYPTFATQQQQSQTLSVTQQQQQQSSQEQQLTSVQQPSQAQLTQPPQQFLQTSRLLHGNPSTQLILSAAFPLQQSTFPQSHHQQHQSQQQQQLSRHRTDSLPDPSKVQPQ</sequence>
<proteinExistence type="evidence at protein level"/>
<protein>
    <recommendedName>
        <fullName>Circadian locomoter output cycles protein kaput</fullName>
        <shortName>hCLOCK</shortName>
        <ecNumber>2.3.1.48</ecNumber>
    </recommendedName>
    <alternativeName>
        <fullName>Class E basic helix-loop-helix protein 8</fullName>
        <shortName>bHLHe8</shortName>
    </alternativeName>
</protein>
<keyword id="KW-0002">3D-structure</keyword>
<keyword id="KW-0010">Activator</keyword>
<keyword id="KW-0012">Acyltransferase</keyword>
<keyword id="KW-0090">Biological rhythms</keyword>
<keyword id="KW-0963">Cytoplasm</keyword>
<keyword id="KW-0227">DNA damage</keyword>
<keyword id="KW-0238">DNA-binding</keyword>
<keyword id="KW-1017">Isopeptide bond</keyword>
<keyword id="KW-0539">Nucleus</keyword>
<keyword id="KW-0597">Phosphoprotein</keyword>
<keyword id="KW-1267">Proteomics identification</keyword>
<keyword id="KW-1185">Reference proteome</keyword>
<keyword id="KW-0677">Repeat</keyword>
<keyword id="KW-0804">Transcription</keyword>
<keyword id="KW-0805">Transcription regulation</keyword>
<keyword id="KW-0808">Transferase</keyword>
<keyword id="KW-0832">Ubl conjugation</keyword>
<evidence type="ECO:0000250" key="1"/>
<evidence type="ECO:0000250" key="2">
    <source>
        <dbReference type="UniProtKB" id="O08785"/>
    </source>
</evidence>
<evidence type="ECO:0000255" key="3">
    <source>
        <dbReference type="PROSITE-ProRule" id="PRU00140"/>
    </source>
</evidence>
<evidence type="ECO:0000255" key="4">
    <source>
        <dbReference type="PROSITE-ProRule" id="PRU00981"/>
    </source>
</evidence>
<evidence type="ECO:0000256" key="5">
    <source>
        <dbReference type="SAM" id="MobiDB-lite"/>
    </source>
</evidence>
<evidence type="ECO:0000269" key="6">
    <source>
    </source>
</evidence>
<evidence type="ECO:0000269" key="7">
    <source>
    </source>
</evidence>
<evidence type="ECO:0000269" key="8">
    <source>
    </source>
</evidence>
<evidence type="ECO:0000269" key="9">
    <source>
    </source>
</evidence>
<evidence type="ECO:0000269" key="10">
    <source>
    </source>
</evidence>
<evidence type="ECO:0000269" key="11">
    <source>
    </source>
</evidence>
<evidence type="ECO:0000269" key="12">
    <source>
    </source>
</evidence>
<evidence type="ECO:0000269" key="13">
    <source>
    </source>
</evidence>
<evidence type="ECO:0000269" key="14">
    <source>
    </source>
</evidence>
<evidence type="ECO:0000269" key="15">
    <source>
    </source>
</evidence>
<evidence type="ECO:0000269" key="16">
    <source>
    </source>
</evidence>
<evidence type="ECO:0000269" key="17">
    <source>
    </source>
</evidence>
<evidence type="ECO:0000269" key="18">
    <source>
    </source>
</evidence>
<evidence type="ECO:0000269" key="19">
    <source>
    </source>
</evidence>
<evidence type="ECO:0000269" key="20">
    <source>
    </source>
</evidence>
<evidence type="ECO:0000269" key="21">
    <source>
    </source>
</evidence>
<evidence type="ECO:0000269" key="22">
    <source>
    </source>
</evidence>
<evidence type="ECO:0000269" key="23">
    <source>
    </source>
</evidence>
<evidence type="ECO:0000269" key="24">
    <source>
    </source>
</evidence>
<evidence type="ECO:0000269" key="25">
    <source>
    </source>
</evidence>
<evidence type="ECO:0000305" key="26"/>
<evidence type="ECO:0007829" key="27">
    <source>
        <dbReference type="PDB" id="4H10"/>
    </source>
</evidence>
<evidence type="ECO:0007829" key="28">
    <source>
        <dbReference type="PDB" id="6QPJ"/>
    </source>
</evidence>